<evidence type="ECO:0000255" key="1">
    <source>
        <dbReference type="HAMAP-Rule" id="MF_00054"/>
    </source>
</evidence>
<protein>
    <recommendedName>
        <fullName evidence="1">Elongation factor G</fullName>
        <shortName evidence="1">EF-G</shortName>
    </recommendedName>
</protein>
<accession>Q2SSW9</accession>
<feature type="chain" id="PRO_0000263472" description="Elongation factor G">
    <location>
        <begin position="1"/>
        <end position="689"/>
    </location>
</feature>
<feature type="domain" description="tr-type G">
    <location>
        <begin position="8"/>
        <end position="282"/>
    </location>
</feature>
<feature type="binding site" evidence="1">
    <location>
        <begin position="17"/>
        <end position="24"/>
    </location>
    <ligand>
        <name>GTP</name>
        <dbReference type="ChEBI" id="CHEBI:37565"/>
    </ligand>
</feature>
<feature type="binding site" evidence="1">
    <location>
        <begin position="81"/>
        <end position="85"/>
    </location>
    <ligand>
        <name>GTP</name>
        <dbReference type="ChEBI" id="CHEBI:37565"/>
    </ligand>
</feature>
<feature type="binding site" evidence="1">
    <location>
        <begin position="135"/>
        <end position="138"/>
    </location>
    <ligand>
        <name>GTP</name>
        <dbReference type="ChEBI" id="CHEBI:37565"/>
    </ligand>
</feature>
<organism>
    <name type="scientific">Mycoplasma capricolum subsp. capricolum (strain California kid / ATCC 27343 / NCTC 10154)</name>
    <dbReference type="NCBI Taxonomy" id="340047"/>
    <lineage>
        <taxon>Bacteria</taxon>
        <taxon>Bacillati</taxon>
        <taxon>Mycoplasmatota</taxon>
        <taxon>Mollicutes</taxon>
        <taxon>Mycoplasmataceae</taxon>
        <taxon>Mycoplasma</taxon>
    </lineage>
</organism>
<reference key="1">
    <citation type="submission" date="2005-09" db="EMBL/GenBank/DDBJ databases">
        <authorList>
            <person name="Glass J.I."/>
            <person name="Lartigue C."/>
            <person name="Pfannkoch C."/>
            <person name="Baden-Tillson H."/>
            <person name="Smith H.O."/>
            <person name="Venter J.C."/>
            <person name="Roske K."/>
            <person name="Wise K.S."/>
            <person name="Calcutt M.J."/>
            <person name="Nelson W.C."/>
            <person name="Nierman W.C."/>
        </authorList>
    </citation>
    <scope>NUCLEOTIDE SEQUENCE [LARGE SCALE GENOMIC DNA]</scope>
    <source>
        <strain>California kid / ATCC 27343 / NCTC 10154</strain>
    </source>
</reference>
<comment type="function">
    <text evidence="1">Catalyzes the GTP-dependent ribosomal translocation step during translation elongation. During this step, the ribosome changes from the pre-translocational (PRE) to the post-translocational (POST) state as the newly formed A-site-bound peptidyl-tRNA and P-site-bound deacylated tRNA move to the P and E sites, respectively. Catalyzes the coordinated movement of the two tRNA molecules, the mRNA and conformational changes in the ribosome.</text>
</comment>
<comment type="subcellular location">
    <subcellularLocation>
        <location evidence="1">Cytoplasm</location>
    </subcellularLocation>
</comment>
<comment type="similarity">
    <text evidence="1">Belongs to the TRAFAC class translation factor GTPase superfamily. Classic translation factor GTPase family. EF-G/EF-2 subfamily.</text>
</comment>
<proteinExistence type="inferred from homology"/>
<dbReference type="EMBL" id="CP000123">
    <property type="protein sequence ID" value="ABC01383.1"/>
    <property type="molecule type" value="Genomic_DNA"/>
</dbReference>
<dbReference type="RefSeq" id="WP_011387047.1">
    <property type="nucleotide sequence ID" value="NC_007633.1"/>
</dbReference>
<dbReference type="SMR" id="Q2SSW9"/>
<dbReference type="GeneID" id="23778894"/>
<dbReference type="KEGG" id="mcp:MCAP_0153"/>
<dbReference type="HOGENOM" id="CLU_002794_4_1_14"/>
<dbReference type="PhylomeDB" id="Q2SSW9"/>
<dbReference type="Proteomes" id="UP000001928">
    <property type="component" value="Chromosome"/>
</dbReference>
<dbReference type="GO" id="GO:0005737">
    <property type="term" value="C:cytoplasm"/>
    <property type="evidence" value="ECO:0007669"/>
    <property type="project" value="UniProtKB-SubCell"/>
</dbReference>
<dbReference type="GO" id="GO:0005525">
    <property type="term" value="F:GTP binding"/>
    <property type="evidence" value="ECO:0007669"/>
    <property type="project" value="UniProtKB-UniRule"/>
</dbReference>
<dbReference type="GO" id="GO:0003924">
    <property type="term" value="F:GTPase activity"/>
    <property type="evidence" value="ECO:0007669"/>
    <property type="project" value="InterPro"/>
</dbReference>
<dbReference type="GO" id="GO:0003746">
    <property type="term" value="F:translation elongation factor activity"/>
    <property type="evidence" value="ECO:0007669"/>
    <property type="project" value="UniProtKB-UniRule"/>
</dbReference>
<dbReference type="GO" id="GO:0032790">
    <property type="term" value="P:ribosome disassembly"/>
    <property type="evidence" value="ECO:0007669"/>
    <property type="project" value="TreeGrafter"/>
</dbReference>
<dbReference type="CDD" id="cd01886">
    <property type="entry name" value="EF-G"/>
    <property type="match status" value="1"/>
</dbReference>
<dbReference type="CDD" id="cd16262">
    <property type="entry name" value="EFG_III"/>
    <property type="match status" value="1"/>
</dbReference>
<dbReference type="CDD" id="cd01434">
    <property type="entry name" value="EFG_mtEFG1_IV"/>
    <property type="match status" value="1"/>
</dbReference>
<dbReference type="CDD" id="cd03713">
    <property type="entry name" value="EFG_mtEFG_C"/>
    <property type="match status" value="1"/>
</dbReference>
<dbReference type="CDD" id="cd04088">
    <property type="entry name" value="EFG_mtEFG_II"/>
    <property type="match status" value="1"/>
</dbReference>
<dbReference type="FunFam" id="2.40.30.10:FF:000006">
    <property type="entry name" value="Elongation factor G"/>
    <property type="match status" value="1"/>
</dbReference>
<dbReference type="FunFam" id="3.30.230.10:FF:000003">
    <property type="entry name" value="Elongation factor G"/>
    <property type="match status" value="1"/>
</dbReference>
<dbReference type="FunFam" id="3.30.70.240:FF:000001">
    <property type="entry name" value="Elongation factor G"/>
    <property type="match status" value="1"/>
</dbReference>
<dbReference type="FunFam" id="3.30.70.870:FF:000001">
    <property type="entry name" value="Elongation factor G"/>
    <property type="match status" value="1"/>
</dbReference>
<dbReference type="FunFam" id="3.40.50.300:FF:000029">
    <property type="entry name" value="Elongation factor G"/>
    <property type="match status" value="1"/>
</dbReference>
<dbReference type="Gene3D" id="3.30.230.10">
    <property type="match status" value="1"/>
</dbReference>
<dbReference type="Gene3D" id="3.30.70.240">
    <property type="match status" value="1"/>
</dbReference>
<dbReference type="Gene3D" id="3.30.70.870">
    <property type="entry name" value="Elongation Factor G (Translational Gtpase), domain 3"/>
    <property type="match status" value="1"/>
</dbReference>
<dbReference type="Gene3D" id="3.40.50.300">
    <property type="entry name" value="P-loop containing nucleotide triphosphate hydrolases"/>
    <property type="match status" value="1"/>
</dbReference>
<dbReference type="Gene3D" id="2.40.30.10">
    <property type="entry name" value="Translation factors"/>
    <property type="match status" value="1"/>
</dbReference>
<dbReference type="HAMAP" id="MF_00054_B">
    <property type="entry name" value="EF_G_EF_2_B"/>
    <property type="match status" value="1"/>
</dbReference>
<dbReference type="InterPro" id="IPR053905">
    <property type="entry name" value="EF-G-like_DII"/>
</dbReference>
<dbReference type="InterPro" id="IPR041095">
    <property type="entry name" value="EFG_II"/>
</dbReference>
<dbReference type="InterPro" id="IPR009022">
    <property type="entry name" value="EFG_III"/>
</dbReference>
<dbReference type="InterPro" id="IPR035647">
    <property type="entry name" value="EFG_III/V"/>
</dbReference>
<dbReference type="InterPro" id="IPR047872">
    <property type="entry name" value="EFG_IV"/>
</dbReference>
<dbReference type="InterPro" id="IPR035649">
    <property type="entry name" value="EFG_V"/>
</dbReference>
<dbReference type="InterPro" id="IPR000640">
    <property type="entry name" value="EFG_V-like"/>
</dbReference>
<dbReference type="InterPro" id="IPR031157">
    <property type="entry name" value="G_TR_CS"/>
</dbReference>
<dbReference type="InterPro" id="IPR027417">
    <property type="entry name" value="P-loop_NTPase"/>
</dbReference>
<dbReference type="InterPro" id="IPR020568">
    <property type="entry name" value="Ribosomal_Su5_D2-typ_SF"/>
</dbReference>
<dbReference type="InterPro" id="IPR014721">
    <property type="entry name" value="Ribsml_uS5_D2-typ_fold_subgr"/>
</dbReference>
<dbReference type="InterPro" id="IPR005225">
    <property type="entry name" value="Small_GTP-bd"/>
</dbReference>
<dbReference type="InterPro" id="IPR000795">
    <property type="entry name" value="T_Tr_GTP-bd_dom"/>
</dbReference>
<dbReference type="InterPro" id="IPR009000">
    <property type="entry name" value="Transl_B-barrel_sf"/>
</dbReference>
<dbReference type="InterPro" id="IPR004540">
    <property type="entry name" value="Transl_elong_EFG/EF2"/>
</dbReference>
<dbReference type="InterPro" id="IPR005517">
    <property type="entry name" value="Transl_elong_EFG/EF2_IV"/>
</dbReference>
<dbReference type="NCBIfam" id="TIGR00484">
    <property type="entry name" value="EF-G"/>
    <property type="match status" value="1"/>
</dbReference>
<dbReference type="NCBIfam" id="NF009381">
    <property type="entry name" value="PRK12740.1-5"/>
    <property type="match status" value="1"/>
</dbReference>
<dbReference type="NCBIfam" id="TIGR00231">
    <property type="entry name" value="small_GTP"/>
    <property type="match status" value="1"/>
</dbReference>
<dbReference type="PANTHER" id="PTHR43261:SF1">
    <property type="entry name" value="RIBOSOME-RELEASING FACTOR 2, MITOCHONDRIAL"/>
    <property type="match status" value="1"/>
</dbReference>
<dbReference type="PANTHER" id="PTHR43261">
    <property type="entry name" value="TRANSLATION ELONGATION FACTOR G-RELATED"/>
    <property type="match status" value="1"/>
</dbReference>
<dbReference type="Pfam" id="PF22042">
    <property type="entry name" value="EF-G_D2"/>
    <property type="match status" value="1"/>
</dbReference>
<dbReference type="Pfam" id="PF00679">
    <property type="entry name" value="EFG_C"/>
    <property type="match status" value="1"/>
</dbReference>
<dbReference type="Pfam" id="PF14492">
    <property type="entry name" value="EFG_III"/>
    <property type="match status" value="1"/>
</dbReference>
<dbReference type="Pfam" id="PF03764">
    <property type="entry name" value="EFG_IV"/>
    <property type="match status" value="1"/>
</dbReference>
<dbReference type="Pfam" id="PF00009">
    <property type="entry name" value="GTP_EFTU"/>
    <property type="match status" value="1"/>
</dbReference>
<dbReference type="PRINTS" id="PR00315">
    <property type="entry name" value="ELONGATNFCT"/>
</dbReference>
<dbReference type="SMART" id="SM00838">
    <property type="entry name" value="EFG_C"/>
    <property type="match status" value="1"/>
</dbReference>
<dbReference type="SMART" id="SM00889">
    <property type="entry name" value="EFG_IV"/>
    <property type="match status" value="1"/>
</dbReference>
<dbReference type="SUPFAM" id="SSF54980">
    <property type="entry name" value="EF-G C-terminal domain-like"/>
    <property type="match status" value="2"/>
</dbReference>
<dbReference type="SUPFAM" id="SSF52540">
    <property type="entry name" value="P-loop containing nucleoside triphosphate hydrolases"/>
    <property type="match status" value="1"/>
</dbReference>
<dbReference type="SUPFAM" id="SSF54211">
    <property type="entry name" value="Ribosomal protein S5 domain 2-like"/>
    <property type="match status" value="1"/>
</dbReference>
<dbReference type="SUPFAM" id="SSF50447">
    <property type="entry name" value="Translation proteins"/>
    <property type="match status" value="1"/>
</dbReference>
<dbReference type="PROSITE" id="PS00301">
    <property type="entry name" value="G_TR_1"/>
    <property type="match status" value="1"/>
</dbReference>
<dbReference type="PROSITE" id="PS51722">
    <property type="entry name" value="G_TR_2"/>
    <property type="match status" value="1"/>
</dbReference>
<name>EFG_MYCCT</name>
<gene>
    <name evidence="1" type="primary">fusA</name>
    <name type="ordered locus">MCAP_0153</name>
</gene>
<keyword id="KW-0963">Cytoplasm</keyword>
<keyword id="KW-0251">Elongation factor</keyword>
<keyword id="KW-0342">GTP-binding</keyword>
<keyword id="KW-0547">Nucleotide-binding</keyword>
<keyword id="KW-0648">Protein biosynthesis</keyword>
<sequence length="689" mass="76265">MAREYSLLNTRNIGIMAHIDAGKTTTTERILFHTGKIHKIGETHEGASQMDWMAQEQERGITITSAATTAFWKNTRFNIIDTPGHVDFTVEVERSLRVLDGAVAVLDGQSGVEPQTETVWRQATNYRVPRIVFVNKMDKTGADFIYSVKTIGDRLGAKAAPIQLPIGAEENFTGIIDLVEMKAYEFDGKPEENYKEIEIPSNLLEQAKELRAHLVEVAVEYDEELLMKFLDGGEISISELKSAIRKGVINADFFPVLAGSAFKNKGVKLLLDAVVDYLPSPIDIPSIKGILPTGEEVERHASDTEPFSALAFKVMTDPFVGKLTFFRVYSGILTKGSYILNSTKQQKERVGRILQMHANNRTEIEEVYSGDIAAAVGLKNTTTGDTLCDEKHEIILESMVFPEPVIQLALEPKTKADQEKMSIALSKLAEEDPTFRTYTDDETGQTIIAGMGELHLDIIVDRMKREFNVATNVGAPQVSYRETIKLPGKAEGKYIKQSGGRGSYGHVVIEFEPNKDKGFEWVDKITGGRVSKEYINSARVGLENALRNGVIAGYPMIDVKATIVDGSMHEVDSNEMAYKIAASMALKEAARKMNPVVLEPIMNVEVTVPDEYYGDVMGNISSKRGMIEGSEQRGNAQTIKSKVPLTEMFGYATELRSFTQGRGNYTMIFSHYAEAPKAIADEIIKKSGK</sequence>